<keyword id="KW-0143">Chaperone</keyword>
<keyword id="KW-0413">Isomerase</keyword>
<keyword id="KW-0574">Periplasm</keyword>
<keyword id="KW-1185">Reference proteome</keyword>
<keyword id="KW-0677">Repeat</keyword>
<keyword id="KW-0697">Rotamase</keyword>
<keyword id="KW-0732">Signal</keyword>
<accession>Q7VU12</accession>
<gene>
    <name evidence="1" type="primary">surA</name>
    <name type="ordered locus">BP3330</name>
</gene>
<organism>
    <name type="scientific">Bordetella pertussis (strain Tohama I / ATCC BAA-589 / NCTC 13251)</name>
    <dbReference type="NCBI Taxonomy" id="257313"/>
    <lineage>
        <taxon>Bacteria</taxon>
        <taxon>Pseudomonadati</taxon>
        <taxon>Pseudomonadota</taxon>
        <taxon>Betaproteobacteria</taxon>
        <taxon>Burkholderiales</taxon>
        <taxon>Alcaligenaceae</taxon>
        <taxon>Bordetella</taxon>
    </lineage>
</organism>
<comment type="function">
    <text evidence="1">Chaperone involved in the correct folding and assembly of outer membrane proteins. Recognizes specific patterns of aromatic residues and the orientation of their side chains, which are found more frequently in integral outer membrane proteins. May act in both early periplasmic and late outer membrane-associated steps of protein maturation.</text>
</comment>
<comment type="catalytic activity">
    <reaction evidence="1">
        <text>[protein]-peptidylproline (omega=180) = [protein]-peptidylproline (omega=0)</text>
        <dbReference type="Rhea" id="RHEA:16237"/>
        <dbReference type="Rhea" id="RHEA-COMP:10747"/>
        <dbReference type="Rhea" id="RHEA-COMP:10748"/>
        <dbReference type="ChEBI" id="CHEBI:83833"/>
        <dbReference type="ChEBI" id="CHEBI:83834"/>
        <dbReference type="EC" id="5.2.1.8"/>
    </reaction>
</comment>
<comment type="subcellular location">
    <subcellularLocation>
        <location evidence="1">Periplasm</location>
    </subcellularLocation>
    <text evidence="1">Is capable of associating with the outer membrane.</text>
</comment>
<comment type="domain">
    <text evidence="1">The PPIase activity resides only in the second parvulin domain. The N-terminal region and the C-terminal tail are necessary and sufficient for the chaperone activity of SurA. The PPIase activity is dispensable for SurA to function as a chaperone. The N-terminal region and the C-terminal tail are also required for porin recognition.</text>
</comment>
<reference key="1">
    <citation type="journal article" date="2003" name="Nat. Genet.">
        <title>Comparative analysis of the genome sequences of Bordetella pertussis, Bordetella parapertussis and Bordetella bronchiseptica.</title>
        <authorList>
            <person name="Parkhill J."/>
            <person name="Sebaihia M."/>
            <person name="Preston A."/>
            <person name="Murphy L.D."/>
            <person name="Thomson N.R."/>
            <person name="Harris D.E."/>
            <person name="Holden M.T.G."/>
            <person name="Churcher C.M."/>
            <person name="Bentley S.D."/>
            <person name="Mungall K.L."/>
            <person name="Cerdeno-Tarraga A.-M."/>
            <person name="Temple L."/>
            <person name="James K.D."/>
            <person name="Harris B."/>
            <person name="Quail M.A."/>
            <person name="Achtman M."/>
            <person name="Atkin R."/>
            <person name="Baker S."/>
            <person name="Basham D."/>
            <person name="Bason N."/>
            <person name="Cherevach I."/>
            <person name="Chillingworth T."/>
            <person name="Collins M."/>
            <person name="Cronin A."/>
            <person name="Davis P."/>
            <person name="Doggett J."/>
            <person name="Feltwell T."/>
            <person name="Goble A."/>
            <person name="Hamlin N."/>
            <person name="Hauser H."/>
            <person name="Holroyd S."/>
            <person name="Jagels K."/>
            <person name="Leather S."/>
            <person name="Moule S."/>
            <person name="Norberczak H."/>
            <person name="O'Neil S."/>
            <person name="Ormond D."/>
            <person name="Price C."/>
            <person name="Rabbinowitsch E."/>
            <person name="Rutter S."/>
            <person name="Sanders M."/>
            <person name="Saunders D."/>
            <person name="Seeger K."/>
            <person name="Sharp S."/>
            <person name="Simmonds M."/>
            <person name="Skelton J."/>
            <person name="Squares R."/>
            <person name="Squares S."/>
            <person name="Stevens K."/>
            <person name="Unwin L."/>
            <person name="Whitehead S."/>
            <person name="Barrell B.G."/>
            <person name="Maskell D.J."/>
        </authorList>
    </citation>
    <scope>NUCLEOTIDE SEQUENCE [LARGE SCALE GENOMIC DNA]</scope>
    <source>
        <strain>Tohama I / ATCC BAA-589 / NCTC 13251</strain>
    </source>
</reference>
<name>SURA_BORPE</name>
<sequence>MMRSLHSLRRMSGTVLALMLAAGLPLSAAQAQPAKPAPKGDQKPATPAPSEQFVDGIAAIVNKDVITLREVREASKLASADLQKRGIQVPDERTLQKQVLQRLIMERLERQEADRMGIRVDEAQVDQAINMIASRNKITPAAMRAEIEKSGVTWEQYRKSLRDDIRMDRLRQRAVDANIIISDAEVDAFLKDQERNPAAAQATRAPAPQQPQPQPRQPAQSGPAMLVLAQILVRVPEGSSPDQVAALRKKAEGLLARAKKGDDFASLAAANSDGPEALQGGMMGARPLDGWPDLFVKAAGSLSAGQVSGLVQSGNGFHILKVVDRAGGGQPAQAARPAPAPAPQQPSSFQEGPSVAAPQGPVRVTQTHARHILIKTSTVMTDDQARQRLEQIRERLQGGAVKFEDMARQYSQDSTAPQGGDLGWVNPGDTVPPFEAAMNALQPNEISPPMLSPFGWHLIQVLERREHDVSDEVQRMRARQLLFERRAVPAFEDWLEQLRSQAFIDNRLEKQERLEQNNR</sequence>
<proteinExistence type="inferred from homology"/>
<evidence type="ECO:0000255" key="1">
    <source>
        <dbReference type="HAMAP-Rule" id="MF_01183"/>
    </source>
</evidence>
<evidence type="ECO:0000256" key="2">
    <source>
        <dbReference type="SAM" id="MobiDB-lite"/>
    </source>
</evidence>
<protein>
    <recommendedName>
        <fullName evidence="1">Chaperone SurA</fullName>
    </recommendedName>
    <alternativeName>
        <fullName evidence="1">Peptidyl-prolyl cis-trans isomerase SurA</fullName>
        <shortName evidence="1">PPIase SurA</shortName>
        <ecNumber evidence="1">5.2.1.8</ecNumber>
    </alternativeName>
    <alternativeName>
        <fullName evidence="1">Rotamase SurA</fullName>
    </alternativeName>
</protein>
<dbReference type="EC" id="5.2.1.8" evidence="1"/>
<dbReference type="EMBL" id="BX640421">
    <property type="protein sequence ID" value="CAE43595.1"/>
    <property type="molecule type" value="Genomic_DNA"/>
</dbReference>
<dbReference type="RefSeq" id="NP_881866.1">
    <property type="nucleotide sequence ID" value="NC_002929.2"/>
</dbReference>
<dbReference type="RefSeq" id="WP_010931412.1">
    <property type="nucleotide sequence ID" value="NZ_CP039022.1"/>
</dbReference>
<dbReference type="SMR" id="Q7VU12"/>
<dbReference type="STRING" id="257313.BP3330"/>
<dbReference type="PaxDb" id="257313-BP3330"/>
<dbReference type="KEGG" id="bpe:BP3330"/>
<dbReference type="PATRIC" id="fig|257313.5.peg.3609"/>
<dbReference type="eggNOG" id="COG0760">
    <property type="taxonomic scope" value="Bacteria"/>
</dbReference>
<dbReference type="HOGENOM" id="CLU_034646_11_0_4"/>
<dbReference type="Proteomes" id="UP000002676">
    <property type="component" value="Chromosome"/>
</dbReference>
<dbReference type="GO" id="GO:0030288">
    <property type="term" value="C:outer membrane-bounded periplasmic space"/>
    <property type="evidence" value="ECO:0007669"/>
    <property type="project" value="InterPro"/>
</dbReference>
<dbReference type="GO" id="GO:0042277">
    <property type="term" value="F:peptide binding"/>
    <property type="evidence" value="ECO:0007669"/>
    <property type="project" value="InterPro"/>
</dbReference>
<dbReference type="GO" id="GO:0003755">
    <property type="term" value="F:peptidyl-prolyl cis-trans isomerase activity"/>
    <property type="evidence" value="ECO:0007669"/>
    <property type="project" value="UniProtKB-UniRule"/>
</dbReference>
<dbReference type="GO" id="GO:0051082">
    <property type="term" value="F:unfolded protein binding"/>
    <property type="evidence" value="ECO:0007669"/>
    <property type="project" value="UniProtKB-UniRule"/>
</dbReference>
<dbReference type="GO" id="GO:0043165">
    <property type="term" value="P:Gram-negative-bacterium-type cell outer membrane assembly"/>
    <property type="evidence" value="ECO:0007669"/>
    <property type="project" value="InterPro"/>
</dbReference>
<dbReference type="GO" id="GO:0006457">
    <property type="term" value="P:protein folding"/>
    <property type="evidence" value="ECO:0007669"/>
    <property type="project" value="UniProtKB-UniRule"/>
</dbReference>
<dbReference type="GO" id="GO:0050821">
    <property type="term" value="P:protein stabilization"/>
    <property type="evidence" value="ECO:0007669"/>
    <property type="project" value="InterPro"/>
</dbReference>
<dbReference type="Gene3D" id="3.10.50.40">
    <property type="match status" value="2"/>
</dbReference>
<dbReference type="Gene3D" id="1.10.4030.10">
    <property type="entry name" value="Porin chaperone SurA, peptide-binding domain"/>
    <property type="match status" value="1"/>
</dbReference>
<dbReference type="HAMAP" id="MF_01183">
    <property type="entry name" value="Chaperone_SurA"/>
    <property type="match status" value="1"/>
</dbReference>
<dbReference type="InterPro" id="IPR050280">
    <property type="entry name" value="OMP_Chaperone_SurA"/>
</dbReference>
<dbReference type="InterPro" id="IPR046357">
    <property type="entry name" value="PPIase_dom_sf"/>
</dbReference>
<dbReference type="InterPro" id="IPR000297">
    <property type="entry name" value="PPIase_PpiC"/>
</dbReference>
<dbReference type="InterPro" id="IPR023034">
    <property type="entry name" value="PPIase_SurA"/>
</dbReference>
<dbReference type="InterPro" id="IPR015391">
    <property type="entry name" value="SurA_N"/>
</dbReference>
<dbReference type="InterPro" id="IPR027304">
    <property type="entry name" value="Trigger_fact/SurA_dom_sf"/>
</dbReference>
<dbReference type="PANTHER" id="PTHR47637">
    <property type="entry name" value="CHAPERONE SURA"/>
    <property type="match status" value="1"/>
</dbReference>
<dbReference type="PANTHER" id="PTHR47637:SF1">
    <property type="entry name" value="CHAPERONE SURA"/>
    <property type="match status" value="1"/>
</dbReference>
<dbReference type="Pfam" id="PF00639">
    <property type="entry name" value="Rotamase"/>
    <property type="match status" value="1"/>
</dbReference>
<dbReference type="Pfam" id="PF13616">
    <property type="entry name" value="Rotamase_3"/>
    <property type="match status" value="1"/>
</dbReference>
<dbReference type="Pfam" id="PF09312">
    <property type="entry name" value="SurA_N"/>
    <property type="match status" value="1"/>
</dbReference>
<dbReference type="SUPFAM" id="SSF54534">
    <property type="entry name" value="FKBP-like"/>
    <property type="match status" value="2"/>
</dbReference>
<dbReference type="SUPFAM" id="SSF109998">
    <property type="entry name" value="Triger factor/SurA peptide-binding domain-like"/>
    <property type="match status" value="1"/>
</dbReference>
<dbReference type="PROSITE" id="PS50198">
    <property type="entry name" value="PPIC_PPIASE_2"/>
    <property type="match status" value="2"/>
</dbReference>
<feature type="signal peptide" evidence="1">
    <location>
        <begin position="1"/>
        <end position="31"/>
    </location>
</feature>
<feature type="chain" id="PRO_0000270004" description="Chaperone SurA">
    <location>
        <begin position="32"/>
        <end position="519"/>
    </location>
</feature>
<feature type="domain" description="PpiC 1" evidence="1">
    <location>
        <begin position="223"/>
        <end position="324"/>
    </location>
</feature>
<feature type="domain" description="PpiC 2" evidence="1">
    <location>
        <begin position="364"/>
        <end position="463"/>
    </location>
</feature>
<feature type="region of interest" description="Disordered" evidence="2">
    <location>
        <begin position="31"/>
        <end position="50"/>
    </location>
</feature>
<feature type="region of interest" description="Disordered" evidence="2">
    <location>
        <begin position="196"/>
        <end position="221"/>
    </location>
</feature>
<feature type="region of interest" description="Disordered" evidence="2">
    <location>
        <begin position="328"/>
        <end position="361"/>
    </location>
</feature>
<feature type="compositionally biased region" description="Low complexity" evidence="2">
    <location>
        <begin position="31"/>
        <end position="45"/>
    </location>
</feature>
<feature type="compositionally biased region" description="Low complexity" evidence="2">
    <location>
        <begin position="197"/>
        <end position="207"/>
    </location>
</feature>